<sequence>MLNVVILAAGLGKRMQSDLPKVLHTLAGRPMLDHVIGSARQLQPARIIVVVGHGADRVKAAFEGLPGLQFALQQPQHGTGHAVQQAVPQLLEGDGEDDVTLVLYGDVPLVQPATLQNLLQARGRGVAVLTEVLADSTGYGRIVRDAQGQVCRIVEHKDASEAERAIKEVNTGILAAPTARLKDWLGRITNDNAQGEYYLTDVIGLAVGDGVPVGAAQPGASWETLGVNSRVQQAQLERAWQSELARRQLEAGVTLADPARFDVRGTLSCGRDVFIDVGCVFEGTVTLGDGVRVGPHCVLRDVAVQAGARIEAYSHLQQAKVGQEAVVGPYARLRPGADLGERSHVGNFVEIKNSVLQADSKANHLAYIGDADIGARVNVGAGTITCNYDGVNKHRTVIEDDAFIGSDTQLVAPVRVGKGATLGAGTTLTKDAPAGQLTISRARQSTIEGWKRPVKKS</sequence>
<reference key="1">
    <citation type="journal article" date="2003" name="Nat. Genet.">
        <title>Comparative analysis of the genome sequences of Bordetella pertussis, Bordetella parapertussis and Bordetella bronchiseptica.</title>
        <authorList>
            <person name="Parkhill J."/>
            <person name="Sebaihia M."/>
            <person name="Preston A."/>
            <person name="Murphy L.D."/>
            <person name="Thomson N.R."/>
            <person name="Harris D.E."/>
            <person name="Holden M.T.G."/>
            <person name="Churcher C.M."/>
            <person name="Bentley S.D."/>
            <person name="Mungall K.L."/>
            <person name="Cerdeno-Tarraga A.-M."/>
            <person name="Temple L."/>
            <person name="James K.D."/>
            <person name="Harris B."/>
            <person name="Quail M.A."/>
            <person name="Achtman M."/>
            <person name="Atkin R."/>
            <person name="Baker S."/>
            <person name="Basham D."/>
            <person name="Bason N."/>
            <person name="Cherevach I."/>
            <person name="Chillingworth T."/>
            <person name="Collins M."/>
            <person name="Cronin A."/>
            <person name="Davis P."/>
            <person name="Doggett J."/>
            <person name="Feltwell T."/>
            <person name="Goble A."/>
            <person name="Hamlin N."/>
            <person name="Hauser H."/>
            <person name="Holroyd S."/>
            <person name="Jagels K."/>
            <person name="Leather S."/>
            <person name="Moule S."/>
            <person name="Norberczak H."/>
            <person name="O'Neil S."/>
            <person name="Ormond D."/>
            <person name="Price C."/>
            <person name="Rabbinowitsch E."/>
            <person name="Rutter S."/>
            <person name="Sanders M."/>
            <person name="Saunders D."/>
            <person name="Seeger K."/>
            <person name="Sharp S."/>
            <person name="Simmonds M."/>
            <person name="Skelton J."/>
            <person name="Squares R."/>
            <person name="Squares S."/>
            <person name="Stevens K."/>
            <person name="Unwin L."/>
            <person name="Whitehead S."/>
            <person name="Barrell B.G."/>
            <person name="Maskell D.J."/>
        </authorList>
    </citation>
    <scope>NUCLEOTIDE SEQUENCE [LARGE SCALE GENOMIC DNA]</scope>
    <source>
        <strain>12822 / ATCC BAA-587 / NCTC 13253</strain>
    </source>
</reference>
<gene>
    <name evidence="1" type="primary">glmU</name>
    <name type="ordered locus">BPP4229</name>
</gene>
<protein>
    <recommendedName>
        <fullName evidence="1">Bifunctional protein GlmU</fullName>
    </recommendedName>
    <domain>
        <recommendedName>
            <fullName evidence="1">UDP-N-acetylglucosamine pyrophosphorylase</fullName>
            <ecNumber evidence="1">2.7.7.23</ecNumber>
        </recommendedName>
        <alternativeName>
            <fullName evidence="1">N-acetylglucosamine-1-phosphate uridyltransferase</fullName>
        </alternativeName>
    </domain>
    <domain>
        <recommendedName>
            <fullName evidence="1">Glucosamine-1-phosphate N-acetyltransferase</fullName>
            <ecNumber evidence="1">2.3.1.157</ecNumber>
        </recommendedName>
    </domain>
</protein>
<name>GLMU_BORPA</name>
<keyword id="KW-0012">Acyltransferase</keyword>
<keyword id="KW-0133">Cell shape</keyword>
<keyword id="KW-0961">Cell wall biogenesis/degradation</keyword>
<keyword id="KW-0963">Cytoplasm</keyword>
<keyword id="KW-0460">Magnesium</keyword>
<keyword id="KW-0479">Metal-binding</keyword>
<keyword id="KW-0511">Multifunctional enzyme</keyword>
<keyword id="KW-0548">Nucleotidyltransferase</keyword>
<keyword id="KW-0573">Peptidoglycan synthesis</keyword>
<keyword id="KW-0677">Repeat</keyword>
<keyword id="KW-0808">Transferase</keyword>
<dbReference type="EC" id="2.7.7.23" evidence="1"/>
<dbReference type="EC" id="2.3.1.157" evidence="1"/>
<dbReference type="EMBL" id="BX640436">
    <property type="protein sequence ID" value="CAE39508.1"/>
    <property type="molecule type" value="Genomic_DNA"/>
</dbReference>
<dbReference type="RefSeq" id="WP_003815721.1">
    <property type="nucleotide sequence ID" value="NC_002928.3"/>
</dbReference>
<dbReference type="SMR" id="Q7W321"/>
<dbReference type="GeneID" id="93206026"/>
<dbReference type="KEGG" id="bpa:BPP4229"/>
<dbReference type="HOGENOM" id="CLU_029499_15_2_4"/>
<dbReference type="UniPathway" id="UPA00113">
    <property type="reaction ID" value="UER00532"/>
</dbReference>
<dbReference type="UniPathway" id="UPA00113">
    <property type="reaction ID" value="UER00533"/>
</dbReference>
<dbReference type="UniPathway" id="UPA00973"/>
<dbReference type="Proteomes" id="UP000001421">
    <property type="component" value="Chromosome"/>
</dbReference>
<dbReference type="GO" id="GO:0005737">
    <property type="term" value="C:cytoplasm"/>
    <property type="evidence" value="ECO:0007669"/>
    <property type="project" value="UniProtKB-SubCell"/>
</dbReference>
<dbReference type="GO" id="GO:0016020">
    <property type="term" value="C:membrane"/>
    <property type="evidence" value="ECO:0007669"/>
    <property type="project" value="GOC"/>
</dbReference>
<dbReference type="GO" id="GO:0019134">
    <property type="term" value="F:glucosamine-1-phosphate N-acetyltransferase activity"/>
    <property type="evidence" value="ECO:0007669"/>
    <property type="project" value="UniProtKB-UniRule"/>
</dbReference>
<dbReference type="GO" id="GO:0000287">
    <property type="term" value="F:magnesium ion binding"/>
    <property type="evidence" value="ECO:0007669"/>
    <property type="project" value="UniProtKB-UniRule"/>
</dbReference>
<dbReference type="GO" id="GO:0003977">
    <property type="term" value="F:UDP-N-acetylglucosamine diphosphorylase activity"/>
    <property type="evidence" value="ECO:0007669"/>
    <property type="project" value="UniProtKB-UniRule"/>
</dbReference>
<dbReference type="GO" id="GO:0000902">
    <property type="term" value="P:cell morphogenesis"/>
    <property type="evidence" value="ECO:0007669"/>
    <property type="project" value="UniProtKB-UniRule"/>
</dbReference>
<dbReference type="GO" id="GO:0071555">
    <property type="term" value="P:cell wall organization"/>
    <property type="evidence" value="ECO:0007669"/>
    <property type="project" value="UniProtKB-KW"/>
</dbReference>
<dbReference type="GO" id="GO:0009245">
    <property type="term" value="P:lipid A biosynthetic process"/>
    <property type="evidence" value="ECO:0007669"/>
    <property type="project" value="UniProtKB-UniRule"/>
</dbReference>
<dbReference type="GO" id="GO:0009252">
    <property type="term" value="P:peptidoglycan biosynthetic process"/>
    <property type="evidence" value="ECO:0007669"/>
    <property type="project" value="UniProtKB-UniRule"/>
</dbReference>
<dbReference type="GO" id="GO:0008360">
    <property type="term" value="P:regulation of cell shape"/>
    <property type="evidence" value="ECO:0007669"/>
    <property type="project" value="UniProtKB-KW"/>
</dbReference>
<dbReference type="GO" id="GO:0006048">
    <property type="term" value="P:UDP-N-acetylglucosamine biosynthetic process"/>
    <property type="evidence" value="ECO:0007669"/>
    <property type="project" value="UniProtKB-UniPathway"/>
</dbReference>
<dbReference type="CDD" id="cd02540">
    <property type="entry name" value="GT2_GlmU_N_bac"/>
    <property type="match status" value="1"/>
</dbReference>
<dbReference type="CDD" id="cd03353">
    <property type="entry name" value="LbH_GlmU_C"/>
    <property type="match status" value="1"/>
</dbReference>
<dbReference type="Gene3D" id="2.160.10.10">
    <property type="entry name" value="Hexapeptide repeat proteins"/>
    <property type="match status" value="1"/>
</dbReference>
<dbReference type="Gene3D" id="3.90.550.10">
    <property type="entry name" value="Spore Coat Polysaccharide Biosynthesis Protein SpsA, Chain A"/>
    <property type="match status" value="1"/>
</dbReference>
<dbReference type="HAMAP" id="MF_01631">
    <property type="entry name" value="GlmU"/>
    <property type="match status" value="1"/>
</dbReference>
<dbReference type="InterPro" id="IPR005882">
    <property type="entry name" value="Bifunctional_GlmU"/>
</dbReference>
<dbReference type="InterPro" id="IPR050065">
    <property type="entry name" value="GlmU-like"/>
</dbReference>
<dbReference type="InterPro" id="IPR038009">
    <property type="entry name" value="GlmU_C_LbH"/>
</dbReference>
<dbReference type="InterPro" id="IPR001451">
    <property type="entry name" value="Hexapep"/>
</dbReference>
<dbReference type="InterPro" id="IPR018357">
    <property type="entry name" value="Hexapep_transf_CS"/>
</dbReference>
<dbReference type="InterPro" id="IPR025877">
    <property type="entry name" value="MobA-like_NTP_Trfase"/>
</dbReference>
<dbReference type="InterPro" id="IPR029044">
    <property type="entry name" value="Nucleotide-diphossugar_trans"/>
</dbReference>
<dbReference type="InterPro" id="IPR011004">
    <property type="entry name" value="Trimer_LpxA-like_sf"/>
</dbReference>
<dbReference type="NCBIfam" id="TIGR01173">
    <property type="entry name" value="glmU"/>
    <property type="match status" value="1"/>
</dbReference>
<dbReference type="PANTHER" id="PTHR43584:SF3">
    <property type="entry name" value="BIFUNCTIONAL PROTEIN GLMU"/>
    <property type="match status" value="1"/>
</dbReference>
<dbReference type="PANTHER" id="PTHR43584">
    <property type="entry name" value="NUCLEOTIDYL TRANSFERASE"/>
    <property type="match status" value="1"/>
</dbReference>
<dbReference type="Pfam" id="PF00132">
    <property type="entry name" value="Hexapep"/>
    <property type="match status" value="2"/>
</dbReference>
<dbReference type="Pfam" id="PF12804">
    <property type="entry name" value="NTP_transf_3"/>
    <property type="match status" value="1"/>
</dbReference>
<dbReference type="SUPFAM" id="SSF53448">
    <property type="entry name" value="Nucleotide-diphospho-sugar transferases"/>
    <property type="match status" value="1"/>
</dbReference>
<dbReference type="SUPFAM" id="SSF51161">
    <property type="entry name" value="Trimeric LpxA-like enzymes"/>
    <property type="match status" value="1"/>
</dbReference>
<dbReference type="PROSITE" id="PS00101">
    <property type="entry name" value="HEXAPEP_TRANSFERASES"/>
    <property type="match status" value="1"/>
</dbReference>
<feature type="chain" id="PRO_0000233741" description="Bifunctional protein GlmU">
    <location>
        <begin position="1"/>
        <end position="457"/>
    </location>
</feature>
<feature type="region of interest" description="Pyrophosphorylase" evidence="1">
    <location>
        <begin position="1"/>
        <end position="230"/>
    </location>
</feature>
<feature type="region of interest" description="Linker" evidence="1">
    <location>
        <begin position="231"/>
        <end position="251"/>
    </location>
</feature>
<feature type="region of interest" description="N-acetyltransferase" evidence="1">
    <location>
        <begin position="252"/>
        <end position="457"/>
    </location>
</feature>
<feature type="active site" description="Proton acceptor" evidence="1">
    <location>
        <position position="364"/>
    </location>
</feature>
<feature type="binding site" evidence="1">
    <location>
        <begin position="7"/>
        <end position="10"/>
    </location>
    <ligand>
        <name>UDP-N-acetyl-alpha-D-glucosamine</name>
        <dbReference type="ChEBI" id="CHEBI:57705"/>
    </ligand>
</feature>
<feature type="binding site" evidence="1">
    <location>
        <position position="21"/>
    </location>
    <ligand>
        <name>UDP-N-acetyl-alpha-D-glucosamine</name>
        <dbReference type="ChEBI" id="CHEBI:57705"/>
    </ligand>
</feature>
<feature type="binding site" evidence="1">
    <location>
        <position position="73"/>
    </location>
    <ligand>
        <name>UDP-N-acetyl-alpha-D-glucosamine</name>
        <dbReference type="ChEBI" id="CHEBI:57705"/>
    </ligand>
</feature>
<feature type="binding site" evidence="1">
    <location>
        <begin position="78"/>
        <end position="79"/>
    </location>
    <ligand>
        <name>UDP-N-acetyl-alpha-D-glucosamine</name>
        <dbReference type="ChEBI" id="CHEBI:57705"/>
    </ligand>
</feature>
<feature type="binding site" evidence="1">
    <location>
        <begin position="104"/>
        <end position="106"/>
    </location>
    <ligand>
        <name>UDP-N-acetyl-alpha-D-glucosamine</name>
        <dbReference type="ChEBI" id="CHEBI:57705"/>
    </ligand>
</feature>
<feature type="binding site" evidence="1">
    <location>
        <position position="106"/>
    </location>
    <ligand>
        <name>Mg(2+)</name>
        <dbReference type="ChEBI" id="CHEBI:18420"/>
    </ligand>
</feature>
<feature type="binding site" evidence="1">
    <location>
        <position position="140"/>
    </location>
    <ligand>
        <name>UDP-N-acetyl-alpha-D-glucosamine</name>
        <dbReference type="ChEBI" id="CHEBI:57705"/>
    </ligand>
</feature>
<feature type="binding site" evidence="1">
    <location>
        <position position="155"/>
    </location>
    <ligand>
        <name>UDP-N-acetyl-alpha-D-glucosamine</name>
        <dbReference type="ChEBI" id="CHEBI:57705"/>
    </ligand>
</feature>
<feature type="binding site" evidence="1">
    <location>
        <position position="170"/>
    </location>
    <ligand>
        <name>UDP-N-acetyl-alpha-D-glucosamine</name>
        <dbReference type="ChEBI" id="CHEBI:57705"/>
    </ligand>
</feature>
<feature type="binding site" evidence="1">
    <location>
        <position position="228"/>
    </location>
    <ligand>
        <name>Mg(2+)</name>
        <dbReference type="ChEBI" id="CHEBI:18420"/>
    </ligand>
</feature>
<feature type="binding site" evidence="1">
    <location>
        <position position="228"/>
    </location>
    <ligand>
        <name>UDP-N-acetyl-alpha-D-glucosamine</name>
        <dbReference type="ChEBI" id="CHEBI:57705"/>
    </ligand>
</feature>
<feature type="binding site" evidence="1">
    <location>
        <position position="334"/>
    </location>
    <ligand>
        <name>UDP-N-acetyl-alpha-D-glucosamine</name>
        <dbReference type="ChEBI" id="CHEBI:57705"/>
    </ligand>
</feature>
<feature type="binding site" evidence="1">
    <location>
        <position position="352"/>
    </location>
    <ligand>
        <name>UDP-N-acetyl-alpha-D-glucosamine</name>
        <dbReference type="ChEBI" id="CHEBI:57705"/>
    </ligand>
</feature>
<feature type="binding site" evidence="1">
    <location>
        <position position="367"/>
    </location>
    <ligand>
        <name>UDP-N-acetyl-alpha-D-glucosamine</name>
        <dbReference type="ChEBI" id="CHEBI:57705"/>
    </ligand>
</feature>
<feature type="binding site" evidence="1">
    <location>
        <position position="378"/>
    </location>
    <ligand>
        <name>UDP-N-acetyl-alpha-D-glucosamine</name>
        <dbReference type="ChEBI" id="CHEBI:57705"/>
    </ligand>
</feature>
<feature type="binding site" evidence="1">
    <location>
        <position position="381"/>
    </location>
    <ligand>
        <name>acetyl-CoA</name>
        <dbReference type="ChEBI" id="CHEBI:57288"/>
    </ligand>
</feature>
<feature type="binding site" evidence="1">
    <location>
        <begin position="387"/>
        <end position="388"/>
    </location>
    <ligand>
        <name>acetyl-CoA</name>
        <dbReference type="ChEBI" id="CHEBI:57288"/>
    </ligand>
</feature>
<feature type="binding site" evidence="1">
    <location>
        <position position="406"/>
    </location>
    <ligand>
        <name>acetyl-CoA</name>
        <dbReference type="ChEBI" id="CHEBI:57288"/>
    </ligand>
</feature>
<feature type="binding site" evidence="1">
    <location>
        <position position="424"/>
    </location>
    <ligand>
        <name>acetyl-CoA</name>
        <dbReference type="ChEBI" id="CHEBI:57288"/>
    </ligand>
</feature>
<feature type="binding site" evidence="1">
    <location>
        <position position="441"/>
    </location>
    <ligand>
        <name>acetyl-CoA</name>
        <dbReference type="ChEBI" id="CHEBI:57288"/>
    </ligand>
</feature>
<organism>
    <name type="scientific">Bordetella parapertussis (strain 12822 / ATCC BAA-587 / NCTC 13253)</name>
    <dbReference type="NCBI Taxonomy" id="257311"/>
    <lineage>
        <taxon>Bacteria</taxon>
        <taxon>Pseudomonadati</taxon>
        <taxon>Pseudomonadota</taxon>
        <taxon>Betaproteobacteria</taxon>
        <taxon>Burkholderiales</taxon>
        <taxon>Alcaligenaceae</taxon>
        <taxon>Bordetella</taxon>
    </lineage>
</organism>
<proteinExistence type="inferred from homology"/>
<comment type="function">
    <text evidence="1">Catalyzes the last two sequential reactions in the de novo biosynthetic pathway for UDP-N-acetylglucosamine (UDP-GlcNAc). The C-terminal domain catalyzes the transfer of acetyl group from acetyl coenzyme A to glucosamine-1-phosphate (GlcN-1-P) to produce N-acetylglucosamine-1-phosphate (GlcNAc-1-P), which is converted into UDP-GlcNAc by the transfer of uridine 5-monophosphate (from uridine 5-triphosphate), a reaction catalyzed by the N-terminal domain.</text>
</comment>
<comment type="catalytic activity">
    <reaction evidence="1">
        <text>alpha-D-glucosamine 1-phosphate + acetyl-CoA = N-acetyl-alpha-D-glucosamine 1-phosphate + CoA + H(+)</text>
        <dbReference type="Rhea" id="RHEA:13725"/>
        <dbReference type="ChEBI" id="CHEBI:15378"/>
        <dbReference type="ChEBI" id="CHEBI:57287"/>
        <dbReference type="ChEBI" id="CHEBI:57288"/>
        <dbReference type="ChEBI" id="CHEBI:57776"/>
        <dbReference type="ChEBI" id="CHEBI:58516"/>
        <dbReference type="EC" id="2.3.1.157"/>
    </reaction>
</comment>
<comment type="catalytic activity">
    <reaction evidence="1">
        <text>N-acetyl-alpha-D-glucosamine 1-phosphate + UTP + H(+) = UDP-N-acetyl-alpha-D-glucosamine + diphosphate</text>
        <dbReference type="Rhea" id="RHEA:13509"/>
        <dbReference type="ChEBI" id="CHEBI:15378"/>
        <dbReference type="ChEBI" id="CHEBI:33019"/>
        <dbReference type="ChEBI" id="CHEBI:46398"/>
        <dbReference type="ChEBI" id="CHEBI:57705"/>
        <dbReference type="ChEBI" id="CHEBI:57776"/>
        <dbReference type="EC" id="2.7.7.23"/>
    </reaction>
</comment>
<comment type="cofactor">
    <cofactor evidence="1">
        <name>Mg(2+)</name>
        <dbReference type="ChEBI" id="CHEBI:18420"/>
    </cofactor>
    <text evidence="1">Binds 1 Mg(2+) ion per subunit.</text>
</comment>
<comment type="pathway">
    <text evidence="1">Nucleotide-sugar biosynthesis; UDP-N-acetyl-alpha-D-glucosamine biosynthesis; N-acetyl-alpha-D-glucosamine 1-phosphate from alpha-D-glucosamine 6-phosphate (route II): step 2/2.</text>
</comment>
<comment type="pathway">
    <text evidence="1">Nucleotide-sugar biosynthesis; UDP-N-acetyl-alpha-D-glucosamine biosynthesis; UDP-N-acetyl-alpha-D-glucosamine from N-acetyl-alpha-D-glucosamine 1-phosphate: step 1/1.</text>
</comment>
<comment type="pathway">
    <text evidence="1">Bacterial outer membrane biogenesis; LPS lipid A biosynthesis.</text>
</comment>
<comment type="subunit">
    <text evidence="1">Homotrimer.</text>
</comment>
<comment type="subcellular location">
    <subcellularLocation>
        <location evidence="1">Cytoplasm</location>
    </subcellularLocation>
</comment>
<comment type="similarity">
    <text evidence="1">In the N-terminal section; belongs to the N-acetylglucosamine-1-phosphate uridyltransferase family.</text>
</comment>
<comment type="similarity">
    <text evidence="1">In the C-terminal section; belongs to the transferase hexapeptide repeat family.</text>
</comment>
<accession>Q7W321</accession>
<evidence type="ECO:0000255" key="1">
    <source>
        <dbReference type="HAMAP-Rule" id="MF_01631"/>
    </source>
</evidence>